<protein>
    <recommendedName>
        <fullName evidence="1">Pyridoxal 5'-phosphate synthase subunit PdxT</fullName>
        <ecNumber evidence="1">4.3.3.6</ecNumber>
    </recommendedName>
    <alternativeName>
        <fullName evidence="1">Pdx2</fullName>
    </alternativeName>
    <alternativeName>
        <fullName evidence="1">Pyridoxal 5'-phosphate synthase glutaminase subunit</fullName>
        <ecNumber evidence="1">3.5.1.2</ecNumber>
    </alternativeName>
</protein>
<dbReference type="EC" id="4.3.3.6" evidence="1"/>
<dbReference type="EC" id="3.5.1.2" evidence="1"/>
<dbReference type="EMBL" id="AP008226">
    <property type="protein sequence ID" value="BAD70530.1"/>
    <property type="molecule type" value="Genomic_DNA"/>
</dbReference>
<dbReference type="RefSeq" id="WP_011228136.1">
    <property type="nucleotide sequence ID" value="NC_006461.1"/>
</dbReference>
<dbReference type="RefSeq" id="YP_143973.1">
    <property type="nucleotide sequence ID" value="NC_006461.1"/>
</dbReference>
<dbReference type="PDB" id="2YWD">
    <property type="method" value="X-ray"/>
    <property type="resolution" value="1.90 A"/>
    <property type="chains" value="A=1-191"/>
</dbReference>
<dbReference type="PDBsum" id="2YWD"/>
<dbReference type="SMR" id="Q5SKD6"/>
<dbReference type="EnsemblBacteria" id="BAD70530">
    <property type="protein sequence ID" value="BAD70530"/>
    <property type="gene ID" value="BAD70530"/>
</dbReference>
<dbReference type="GeneID" id="3168933"/>
<dbReference type="KEGG" id="ttj:TTHA0707"/>
<dbReference type="PATRIC" id="fig|300852.9.peg.701"/>
<dbReference type="eggNOG" id="COG0311">
    <property type="taxonomic scope" value="Bacteria"/>
</dbReference>
<dbReference type="HOGENOM" id="CLU_069674_2_0_0"/>
<dbReference type="PhylomeDB" id="Q5SKD6"/>
<dbReference type="UniPathway" id="UPA00245"/>
<dbReference type="EvolutionaryTrace" id="Q5SKD6"/>
<dbReference type="Proteomes" id="UP000000532">
    <property type="component" value="Chromosome"/>
</dbReference>
<dbReference type="GO" id="GO:0005829">
    <property type="term" value="C:cytosol"/>
    <property type="evidence" value="ECO:0007669"/>
    <property type="project" value="TreeGrafter"/>
</dbReference>
<dbReference type="GO" id="GO:1903600">
    <property type="term" value="C:glutaminase complex"/>
    <property type="evidence" value="ECO:0007669"/>
    <property type="project" value="TreeGrafter"/>
</dbReference>
<dbReference type="GO" id="GO:0004359">
    <property type="term" value="F:glutaminase activity"/>
    <property type="evidence" value="ECO:0007669"/>
    <property type="project" value="UniProtKB-UniRule"/>
</dbReference>
<dbReference type="GO" id="GO:0036381">
    <property type="term" value="F:pyridoxal 5'-phosphate synthase (glutamine hydrolysing) activity"/>
    <property type="evidence" value="ECO:0007669"/>
    <property type="project" value="UniProtKB-UniRule"/>
</dbReference>
<dbReference type="GO" id="GO:0006543">
    <property type="term" value="P:glutamine catabolic process"/>
    <property type="evidence" value="ECO:0007669"/>
    <property type="project" value="UniProtKB-UniRule"/>
</dbReference>
<dbReference type="GO" id="GO:0042823">
    <property type="term" value="P:pyridoxal phosphate biosynthetic process"/>
    <property type="evidence" value="ECO:0007669"/>
    <property type="project" value="UniProtKB-UniRule"/>
</dbReference>
<dbReference type="GO" id="GO:0008614">
    <property type="term" value="P:pyridoxine metabolic process"/>
    <property type="evidence" value="ECO:0007669"/>
    <property type="project" value="TreeGrafter"/>
</dbReference>
<dbReference type="CDD" id="cd01749">
    <property type="entry name" value="GATase1_PB"/>
    <property type="match status" value="1"/>
</dbReference>
<dbReference type="FunFam" id="3.40.50.880:FF:000010">
    <property type="entry name" value="uncharacterized protein LOC100176842 isoform X2"/>
    <property type="match status" value="1"/>
</dbReference>
<dbReference type="Gene3D" id="3.40.50.880">
    <property type="match status" value="1"/>
</dbReference>
<dbReference type="HAMAP" id="MF_01615">
    <property type="entry name" value="PdxT"/>
    <property type="match status" value="1"/>
</dbReference>
<dbReference type="InterPro" id="IPR029062">
    <property type="entry name" value="Class_I_gatase-like"/>
</dbReference>
<dbReference type="InterPro" id="IPR002161">
    <property type="entry name" value="PdxT/SNO"/>
</dbReference>
<dbReference type="InterPro" id="IPR021196">
    <property type="entry name" value="PdxT/SNO_CS"/>
</dbReference>
<dbReference type="NCBIfam" id="TIGR03800">
    <property type="entry name" value="PLP_synth_Pdx2"/>
    <property type="match status" value="1"/>
</dbReference>
<dbReference type="PANTHER" id="PTHR31559">
    <property type="entry name" value="PYRIDOXAL 5'-PHOSPHATE SYNTHASE SUBUNIT SNO"/>
    <property type="match status" value="1"/>
</dbReference>
<dbReference type="PANTHER" id="PTHR31559:SF0">
    <property type="entry name" value="PYRIDOXAL 5'-PHOSPHATE SYNTHASE SUBUNIT SNO1-RELATED"/>
    <property type="match status" value="1"/>
</dbReference>
<dbReference type="Pfam" id="PF01174">
    <property type="entry name" value="SNO"/>
    <property type="match status" value="1"/>
</dbReference>
<dbReference type="PIRSF" id="PIRSF005639">
    <property type="entry name" value="Glut_amidoT_SNO"/>
    <property type="match status" value="1"/>
</dbReference>
<dbReference type="SUPFAM" id="SSF52317">
    <property type="entry name" value="Class I glutamine amidotransferase-like"/>
    <property type="match status" value="1"/>
</dbReference>
<dbReference type="PROSITE" id="PS01236">
    <property type="entry name" value="PDXT_SNO_1"/>
    <property type="match status" value="1"/>
</dbReference>
<dbReference type="PROSITE" id="PS51130">
    <property type="entry name" value="PDXT_SNO_2"/>
    <property type="match status" value="1"/>
</dbReference>
<organism>
    <name type="scientific">Thermus thermophilus (strain ATCC 27634 / DSM 579 / HB8)</name>
    <dbReference type="NCBI Taxonomy" id="300852"/>
    <lineage>
        <taxon>Bacteria</taxon>
        <taxon>Thermotogati</taxon>
        <taxon>Deinococcota</taxon>
        <taxon>Deinococci</taxon>
        <taxon>Thermales</taxon>
        <taxon>Thermaceae</taxon>
        <taxon>Thermus</taxon>
    </lineage>
</organism>
<accession>Q5SKD6</accession>
<comment type="function">
    <text evidence="1">Catalyzes the hydrolysis of glutamine to glutamate and ammonia as part of the biosynthesis of pyridoxal 5'-phosphate. The resulting ammonia molecule is channeled to the active site of PdxS.</text>
</comment>
<comment type="catalytic activity">
    <reaction evidence="1">
        <text>aldehydo-D-ribose 5-phosphate + D-glyceraldehyde 3-phosphate + L-glutamine = pyridoxal 5'-phosphate + L-glutamate + phosphate + 3 H2O + H(+)</text>
        <dbReference type="Rhea" id="RHEA:31507"/>
        <dbReference type="ChEBI" id="CHEBI:15377"/>
        <dbReference type="ChEBI" id="CHEBI:15378"/>
        <dbReference type="ChEBI" id="CHEBI:29985"/>
        <dbReference type="ChEBI" id="CHEBI:43474"/>
        <dbReference type="ChEBI" id="CHEBI:58273"/>
        <dbReference type="ChEBI" id="CHEBI:58359"/>
        <dbReference type="ChEBI" id="CHEBI:59776"/>
        <dbReference type="ChEBI" id="CHEBI:597326"/>
        <dbReference type="EC" id="4.3.3.6"/>
    </reaction>
</comment>
<comment type="catalytic activity">
    <reaction evidence="1">
        <text>L-glutamine + H2O = L-glutamate + NH4(+)</text>
        <dbReference type="Rhea" id="RHEA:15889"/>
        <dbReference type="ChEBI" id="CHEBI:15377"/>
        <dbReference type="ChEBI" id="CHEBI:28938"/>
        <dbReference type="ChEBI" id="CHEBI:29985"/>
        <dbReference type="ChEBI" id="CHEBI:58359"/>
        <dbReference type="EC" id="3.5.1.2"/>
    </reaction>
</comment>
<comment type="pathway">
    <text evidence="1">Cofactor biosynthesis; pyridoxal 5'-phosphate biosynthesis.</text>
</comment>
<comment type="subunit">
    <text evidence="1">In the presence of PdxS, forms a dodecamer of heterodimers. Only shows activity in the heterodimer.</text>
</comment>
<comment type="similarity">
    <text evidence="1">Belongs to the glutaminase PdxT/SNO family.</text>
</comment>
<keyword id="KW-0002">3D-structure</keyword>
<keyword id="KW-0315">Glutamine amidotransferase</keyword>
<keyword id="KW-0378">Hydrolase</keyword>
<keyword id="KW-0456">Lyase</keyword>
<keyword id="KW-0663">Pyridoxal phosphate</keyword>
<keyword id="KW-1185">Reference proteome</keyword>
<reference key="1">
    <citation type="submission" date="2004-11" db="EMBL/GenBank/DDBJ databases">
        <title>Complete genome sequence of Thermus thermophilus HB8.</title>
        <authorList>
            <person name="Masui R."/>
            <person name="Kurokawa K."/>
            <person name="Nakagawa N."/>
            <person name="Tokunaga F."/>
            <person name="Koyama Y."/>
            <person name="Shibata T."/>
            <person name="Oshima T."/>
            <person name="Yokoyama S."/>
            <person name="Yasunaga T."/>
            <person name="Kuramitsu S."/>
        </authorList>
    </citation>
    <scope>NUCLEOTIDE SEQUENCE [LARGE SCALE GENOMIC DNA]</scope>
    <source>
        <strain>ATCC 27634 / DSM 579 / HB8</strain>
    </source>
</reference>
<reference key="2">
    <citation type="submission" date="2007-04" db="PDB data bank">
        <title>Crystal structure of glutamine amidotransferase.</title>
        <authorList>
            <person name="Manzoku M."/>
            <person name="Ebihara A."/>
            <person name="Fujimoto Y."/>
            <person name="Yokoyama S."/>
            <person name="Kuramitsu S."/>
        </authorList>
    </citation>
    <scope>X-RAY CRYSTALLOGRAPHY (1.90 ANGSTROMS)</scope>
</reference>
<sequence length="191" mass="21209">MRGVVGVLALQGDFREHKEALKRLGIEAKEVRKKEHLEGLKALIVPGGESTTIGKLAREYGIEDEVRKRVEEGSLALFGTCAGAIWLAKEIVGYPEQPRLGVLEAWVERNAFGRQVESFEEDLEVEGLGSFHGVFIRAPVFRRLGEGVEVLARLGDLPVLVRQGKVLASSFHPELTEDPRLHRYFLELAGV</sequence>
<name>PDXT_THET8</name>
<proteinExistence type="evidence at protein level"/>
<feature type="chain" id="PRO_0000135671" description="Pyridoxal 5'-phosphate synthase subunit PdxT">
    <location>
        <begin position="1"/>
        <end position="191"/>
    </location>
</feature>
<feature type="active site" description="Nucleophile" evidence="1">
    <location>
        <position position="81"/>
    </location>
</feature>
<feature type="active site" description="Charge relay system" evidence="1">
    <location>
        <position position="172"/>
    </location>
</feature>
<feature type="active site" description="Charge relay system" evidence="1">
    <location>
        <position position="174"/>
    </location>
</feature>
<feature type="binding site" evidence="1">
    <location>
        <begin position="48"/>
        <end position="50"/>
    </location>
    <ligand>
        <name>L-glutamine</name>
        <dbReference type="ChEBI" id="CHEBI:58359"/>
    </ligand>
</feature>
<feature type="binding site" evidence="1">
    <location>
        <position position="109"/>
    </location>
    <ligand>
        <name>L-glutamine</name>
        <dbReference type="ChEBI" id="CHEBI:58359"/>
    </ligand>
</feature>
<feature type="binding site" evidence="1">
    <location>
        <begin position="136"/>
        <end position="137"/>
    </location>
    <ligand>
        <name>L-glutamine</name>
        <dbReference type="ChEBI" id="CHEBI:58359"/>
    </ligand>
</feature>
<feature type="strand" evidence="2">
    <location>
        <begin position="5"/>
        <end position="8"/>
    </location>
</feature>
<feature type="strand" evidence="2">
    <location>
        <begin position="10"/>
        <end position="12"/>
    </location>
</feature>
<feature type="helix" evidence="2">
    <location>
        <begin position="14"/>
        <end position="22"/>
    </location>
</feature>
<feature type="turn" evidence="2">
    <location>
        <begin position="23"/>
        <end position="25"/>
    </location>
</feature>
<feature type="strand" evidence="2">
    <location>
        <begin position="29"/>
        <end position="31"/>
    </location>
</feature>
<feature type="helix" evidence="2">
    <location>
        <begin position="34"/>
        <end position="37"/>
    </location>
</feature>
<feature type="strand" evidence="2">
    <location>
        <begin position="41"/>
        <end position="45"/>
    </location>
</feature>
<feature type="helix" evidence="2">
    <location>
        <begin position="50"/>
        <end position="59"/>
    </location>
</feature>
<feature type="helix" evidence="2">
    <location>
        <begin position="62"/>
        <end position="71"/>
    </location>
</feature>
<feature type="strand" evidence="2">
    <location>
        <begin position="76"/>
        <end position="80"/>
    </location>
</feature>
<feature type="helix" evidence="2">
    <location>
        <begin position="82"/>
        <end position="87"/>
    </location>
</feature>
<feature type="strand" evidence="2">
    <location>
        <begin position="88"/>
        <end position="91"/>
    </location>
</feature>
<feature type="strand" evidence="2">
    <location>
        <begin position="103"/>
        <end position="108"/>
    </location>
</feature>
<feature type="strand" evidence="2">
    <location>
        <begin position="115"/>
        <end position="125"/>
    </location>
</feature>
<feature type="turn" evidence="2">
    <location>
        <begin position="126"/>
        <end position="128"/>
    </location>
</feature>
<feature type="strand" evidence="2">
    <location>
        <begin position="129"/>
        <end position="137"/>
    </location>
</feature>
<feature type="strand" evidence="2">
    <location>
        <begin position="140"/>
        <end position="144"/>
    </location>
</feature>
<feature type="strand" evidence="2">
    <location>
        <begin position="149"/>
        <end position="154"/>
    </location>
</feature>
<feature type="strand" evidence="2">
    <location>
        <begin position="157"/>
        <end position="163"/>
    </location>
</feature>
<feature type="strand" evidence="2">
    <location>
        <begin position="166"/>
        <end position="171"/>
    </location>
</feature>
<feature type="helix" evidence="2">
    <location>
        <begin position="173"/>
        <end position="175"/>
    </location>
</feature>
<feature type="helix" evidence="2">
    <location>
        <begin position="180"/>
        <end position="189"/>
    </location>
</feature>
<gene>
    <name evidence="1" type="primary">pdxT</name>
    <name type="ordered locus">TTHA0707</name>
</gene>
<evidence type="ECO:0000255" key="1">
    <source>
        <dbReference type="HAMAP-Rule" id="MF_01615"/>
    </source>
</evidence>
<evidence type="ECO:0007829" key="2">
    <source>
        <dbReference type="PDB" id="2YWD"/>
    </source>
</evidence>